<keyword id="KW-0175">Coiled coil</keyword>
<keyword id="KW-0489">Methyltransferase</keyword>
<keyword id="KW-0539">Nucleus</keyword>
<keyword id="KW-1185">Reference proteome</keyword>
<keyword id="KW-0690">Ribosome biogenesis</keyword>
<keyword id="KW-0698">rRNA processing</keyword>
<keyword id="KW-0949">S-adenosyl-L-methionine</keyword>
<keyword id="KW-0808">Transferase</keyword>
<reference key="1">
    <citation type="journal article" date="2005" name="Nature">
        <title>The genome sequence of the rice blast fungus Magnaporthe grisea.</title>
        <authorList>
            <person name="Dean R.A."/>
            <person name="Talbot N.J."/>
            <person name="Ebbole D.J."/>
            <person name="Farman M.L."/>
            <person name="Mitchell T.K."/>
            <person name="Orbach M.J."/>
            <person name="Thon M.R."/>
            <person name="Kulkarni R."/>
            <person name="Xu J.-R."/>
            <person name="Pan H."/>
            <person name="Read N.D."/>
            <person name="Lee Y.-H."/>
            <person name="Carbone I."/>
            <person name="Brown D."/>
            <person name="Oh Y.Y."/>
            <person name="Donofrio N."/>
            <person name="Jeong J.S."/>
            <person name="Soanes D.M."/>
            <person name="Djonovic S."/>
            <person name="Kolomiets E."/>
            <person name="Rehmeyer C."/>
            <person name="Li W."/>
            <person name="Harding M."/>
            <person name="Kim S."/>
            <person name="Lebrun M.-H."/>
            <person name="Bohnert H."/>
            <person name="Coughlan S."/>
            <person name="Butler J."/>
            <person name="Calvo S.E."/>
            <person name="Ma L.-J."/>
            <person name="Nicol R."/>
            <person name="Purcell S."/>
            <person name="Nusbaum C."/>
            <person name="Galagan J.E."/>
            <person name="Birren B.W."/>
        </authorList>
    </citation>
    <scope>NUCLEOTIDE SEQUENCE [LARGE SCALE GENOMIC DNA]</scope>
    <source>
        <strain>70-15 / ATCC MYA-4617 / FGSC 8958</strain>
    </source>
</reference>
<proteinExistence type="inferred from homology"/>
<comment type="function">
    <text evidence="1">Required for proper assembly of pre-ribosomal particles during the biogenesis of the 60S ribosomal subunit.</text>
</comment>
<comment type="catalytic activity">
    <reaction evidence="1">
        <text>a ribonucleotide in rRNA + S-adenosyl-L-methionine = a 2'-O-methylribonucleotide in rRNA + S-adenosyl-L-homocysteine + H(+)</text>
        <dbReference type="Rhea" id="RHEA:48628"/>
        <dbReference type="Rhea" id="RHEA-COMP:12164"/>
        <dbReference type="Rhea" id="RHEA-COMP:12165"/>
        <dbReference type="ChEBI" id="CHEBI:15378"/>
        <dbReference type="ChEBI" id="CHEBI:57856"/>
        <dbReference type="ChEBI" id="CHEBI:59789"/>
        <dbReference type="ChEBI" id="CHEBI:90675"/>
        <dbReference type="ChEBI" id="CHEBI:90676"/>
    </reaction>
</comment>
<comment type="subunit">
    <text evidence="1">Component of the nucleolar and nucleoplasmic pre-60S ribosomal particle.</text>
</comment>
<comment type="subcellular location">
    <subcellularLocation>
        <location evidence="1">Nucleus</location>
        <location evidence="1">Nucleolus</location>
    </subcellularLocation>
</comment>
<comment type="similarity">
    <text evidence="1">Belongs to the class I-like SAM-binding methyltransferase superfamily. RNA methyltransferase RlmE family. SPB1 subfamily.</text>
</comment>
<sequence>MAIQKKHGKGRLDKWYKLAKEKGYRARAAFKLIQLNKKYGFLEKSKVLLDLCAAPGSWCQVAAEVMPVSSLIVGVDLAPIKPIPKVITFQSDITTEKCRATIRQHLKTWKADTVLHDGAPNVGTAWVQDSFNQAELTLQAMKLATEFLVEGGTFVTKVFRSKDYNSMLWVFNQLFKKVEATKPPSSRNVSAEIFVVCRGFKAPKRIDPKFLDPRAVFAELADPTPNNEAKVYKPEIKKRKRDGYEEGDYTQYKELPAYEFIQSTDPIAILGSTNRLSLEQSKNGDVALAVLEKLPETTDEIRTCCADLKVLGRKEFKLLLKWRLAVREKLGFPTKKSVKKEEEAAAAVAAAEEVAKIESMDEEMRIQHELEKLKERNSTKKKRERRKENERKQKDIVRMQMHMVAPMDIGVEQAGPEGEDAMFALRAVEKGDVMRRLAKGKMVVASEADAKKDRDSGIGSSGETDDESDEELDRLETELDDMYDQFRERKAASDAKYRAKKARQARNGDGDEEWEGVSDNEKADEISDDSELEEESSGDSDDEDDTAPRKSLLTDLDTTPSDNSGLSKRARAFFNQDIFKELDGDMDEPMDEELRAALAGEDEDADMEDTVSKADSKKTKEKTADKKAAKKAKKAAQKAQQVKDDDSDDESDGGFEVVKSGKEDDWEDEDKRTKDGRLDIDIITAEAMTLAHQLATGQKSSHDVIDDGFNKHAFKDREGLPEWFLDDETKHDKPQKPITKAAAAAIKEKMRAFNARPIKKVREAKGRKKMKAAQRLEKLKKKSDLLVNEEGMTEKEKAESIAKLLRKATKKKPKQAVKVVVAKGANRGIKGRPQGIKGRYKIVDPRMKKEMRALKRVAQKAKKRR</sequence>
<organism>
    <name type="scientific">Pyricularia oryzae (strain 70-15 / ATCC MYA-4617 / FGSC 8958)</name>
    <name type="common">Rice blast fungus</name>
    <name type="synonym">Magnaporthe oryzae</name>
    <dbReference type="NCBI Taxonomy" id="242507"/>
    <lineage>
        <taxon>Eukaryota</taxon>
        <taxon>Fungi</taxon>
        <taxon>Dikarya</taxon>
        <taxon>Ascomycota</taxon>
        <taxon>Pezizomycotina</taxon>
        <taxon>Sordariomycetes</taxon>
        <taxon>Sordariomycetidae</taxon>
        <taxon>Magnaporthales</taxon>
        <taxon>Pyriculariaceae</taxon>
        <taxon>Pyricularia</taxon>
    </lineage>
</organism>
<feature type="chain" id="PRO_0000155599" description="AdoMet-dependent rRNA methyltransferase SPB1">
    <location>
        <begin position="1"/>
        <end position="865"/>
    </location>
</feature>
<feature type="region of interest" description="Disordered" evidence="2">
    <location>
        <begin position="370"/>
        <end position="396"/>
    </location>
</feature>
<feature type="region of interest" description="Disordered" evidence="2">
    <location>
        <begin position="443"/>
        <end position="676"/>
    </location>
</feature>
<feature type="coiled-coil region" evidence="1">
    <location>
        <begin position="358"/>
        <end position="400"/>
    </location>
</feature>
<feature type="coiled-coil region" evidence="1">
    <location>
        <begin position="462"/>
        <end position="492"/>
    </location>
</feature>
<feature type="coiled-coil region" evidence="1">
    <location>
        <begin position="762"/>
        <end position="789"/>
    </location>
</feature>
<feature type="compositionally biased region" description="Basic and acidic residues" evidence="2">
    <location>
        <begin position="386"/>
        <end position="396"/>
    </location>
</feature>
<feature type="compositionally biased region" description="Acidic residues" evidence="2">
    <location>
        <begin position="463"/>
        <end position="483"/>
    </location>
</feature>
<feature type="compositionally biased region" description="Basic and acidic residues" evidence="2">
    <location>
        <begin position="484"/>
        <end position="497"/>
    </location>
</feature>
<feature type="compositionally biased region" description="Acidic residues" evidence="2">
    <location>
        <begin position="526"/>
        <end position="545"/>
    </location>
</feature>
<feature type="compositionally biased region" description="Polar residues" evidence="2">
    <location>
        <begin position="556"/>
        <end position="566"/>
    </location>
</feature>
<feature type="compositionally biased region" description="Acidic residues" evidence="2">
    <location>
        <begin position="600"/>
        <end position="609"/>
    </location>
</feature>
<feature type="compositionally biased region" description="Basic and acidic residues" evidence="2">
    <location>
        <begin position="610"/>
        <end position="627"/>
    </location>
</feature>
<feature type="compositionally biased region" description="Basic and acidic residues" evidence="2">
    <location>
        <begin position="659"/>
        <end position="676"/>
    </location>
</feature>
<feature type="active site" description="Proton acceptor" evidence="1">
    <location>
        <position position="157"/>
    </location>
</feature>
<feature type="binding site" evidence="1">
    <location>
        <position position="56"/>
    </location>
    <ligand>
        <name>S-adenosyl-L-methionine</name>
        <dbReference type="ChEBI" id="CHEBI:59789"/>
    </ligand>
</feature>
<feature type="binding site" evidence="1">
    <location>
        <position position="58"/>
    </location>
    <ligand>
        <name>S-adenosyl-L-methionine</name>
        <dbReference type="ChEBI" id="CHEBI:59789"/>
    </ligand>
</feature>
<feature type="binding site" evidence="1">
    <location>
        <position position="76"/>
    </location>
    <ligand>
        <name>S-adenosyl-L-methionine</name>
        <dbReference type="ChEBI" id="CHEBI:59789"/>
    </ligand>
</feature>
<feature type="binding site" evidence="1">
    <location>
        <position position="92"/>
    </location>
    <ligand>
        <name>S-adenosyl-L-methionine</name>
        <dbReference type="ChEBI" id="CHEBI:59789"/>
    </ligand>
</feature>
<feature type="binding site" evidence="1">
    <location>
        <position position="117"/>
    </location>
    <ligand>
        <name>S-adenosyl-L-methionine</name>
        <dbReference type="ChEBI" id="CHEBI:59789"/>
    </ligand>
</feature>
<name>SPB1_PYRO7</name>
<gene>
    <name evidence="1" type="primary">SPB1</name>
    <name type="ORF">MGG_08140</name>
</gene>
<dbReference type="EC" id="2.1.1.-" evidence="1"/>
<dbReference type="EMBL" id="CM001232">
    <property type="protein sequence ID" value="EHA55296.1"/>
    <property type="molecule type" value="Genomic_DNA"/>
</dbReference>
<dbReference type="RefSeq" id="XP_003715103.1">
    <property type="nucleotide sequence ID" value="XM_003715055.1"/>
</dbReference>
<dbReference type="SMR" id="Q52C47"/>
<dbReference type="FunCoup" id="Q52C47">
    <property type="interactions" value="1091"/>
</dbReference>
<dbReference type="STRING" id="242507.Q52C47"/>
<dbReference type="EnsemblFungi" id="MGG_08140T0">
    <property type="protein sequence ID" value="MGG_08140T0"/>
    <property type="gene ID" value="MGG_08140"/>
</dbReference>
<dbReference type="GeneID" id="2678355"/>
<dbReference type="KEGG" id="mgr:MGG_08140"/>
<dbReference type="VEuPathDB" id="FungiDB:MGG_08140"/>
<dbReference type="eggNOG" id="KOG1098">
    <property type="taxonomic scope" value="Eukaryota"/>
</dbReference>
<dbReference type="HOGENOM" id="CLU_009422_8_1_1"/>
<dbReference type="InParanoid" id="Q52C47"/>
<dbReference type="OMA" id="QRKDKYY"/>
<dbReference type="OrthoDB" id="1287559at2759"/>
<dbReference type="Proteomes" id="UP000009058">
    <property type="component" value="Chromosome 2"/>
</dbReference>
<dbReference type="GO" id="GO:0005730">
    <property type="term" value="C:nucleolus"/>
    <property type="evidence" value="ECO:0007669"/>
    <property type="project" value="UniProtKB-SubCell"/>
</dbReference>
<dbReference type="GO" id="GO:0030687">
    <property type="term" value="C:preribosome, large subunit precursor"/>
    <property type="evidence" value="ECO:0007669"/>
    <property type="project" value="UniProtKB-UniRule"/>
</dbReference>
<dbReference type="GO" id="GO:0070039">
    <property type="term" value="F:rRNA (guanosine-2'-O-)-methyltransferase activity"/>
    <property type="evidence" value="ECO:0007669"/>
    <property type="project" value="UniProtKB-UniRule"/>
</dbReference>
<dbReference type="GO" id="GO:0008650">
    <property type="term" value="F:rRNA (uridine-2'-O-)-methyltransferase activity"/>
    <property type="evidence" value="ECO:0007669"/>
    <property type="project" value="UniProtKB-UniRule"/>
</dbReference>
<dbReference type="GO" id="GO:0000466">
    <property type="term" value="P:maturation of 5.8S rRNA from tricistronic rRNA transcript (SSU-rRNA, 5.8S rRNA, LSU-rRNA)"/>
    <property type="evidence" value="ECO:0007669"/>
    <property type="project" value="EnsemblFungi"/>
</dbReference>
<dbReference type="GO" id="GO:0000463">
    <property type="term" value="P:maturation of LSU-rRNA from tricistronic rRNA transcript (SSU-rRNA, 5.8S rRNA, LSU-rRNA)"/>
    <property type="evidence" value="ECO:0007669"/>
    <property type="project" value="EnsemblFungi"/>
</dbReference>
<dbReference type="FunFam" id="3.40.50.150:FF:000004">
    <property type="entry name" value="AdoMet-dependent rRNA methyltransferase SPB1"/>
    <property type="match status" value="1"/>
</dbReference>
<dbReference type="Gene3D" id="3.40.50.150">
    <property type="entry name" value="Vaccinia Virus protein VP39"/>
    <property type="match status" value="1"/>
</dbReference>
<dbReference type="HAMAP" id="MF_01547">
    <property type="entry name" value="RNA_methyltr_E"/>
    <property type="match status" value="1"/>
</dbReference>
<dbReference type="HAMAP" id="MF_03163">
    <property type="entry name" value="RNA_methyltr_E_SPB1"/>
    <property type="match status" value="1"/>
</dbReference>
<dbReference type="InterPro" id="IPR050082">
    <property type="entry name" value="RNA_methyltr_RlmE"/>
</dbReference>
<dbReference type="InterPro" id="IPR002877">
    <property type="entry name" value="RNA_MeTrfase_FtsJ_dom"/>
</dbReference>
<dbReference type="InterPro" id="IPR015507">
    <property type="entry name" value="rRNA-MeTfrase_E"/>
</dbReference>
<dbReference type="InterPro" id="IPR012920">
    <property type="entry name" value="rRNA_MeTfrase_SPB1-like_C"/>
</dbReference>
<dbReference type="InterPro" id="IPR024576">
    <property type="entry name" value="rRNA_MeTfrase_Spb1_DUF3381"/>
</dbReference>
<dbReference type="InterPro" id="IPR029063">
    <property type="entry name" value="SAM-dependent_MTases_sf"/>
</dbReference>
<dbReference type="InterPro" id="IPR028589">
    <property type="entry name" value="SPB1-like"/>
</dbReference>
<dbReference type="PANTHER" id="PTHR10920:SF13">
    <property type="entry name" value="PRE-RRNA 2'-O-RIBOSE RNA METHYLTRANSFERASE FTSJ3"/>
    <property type="match status" value="1"/>
</dbReference>
<dbReference type="PANTHER" id="PTHR10920">
    <property type="entry name" value="RIBOSOMAL RNA METHYLTRANSFERASE"/>
    <property type="match status" value="1"/>
</dbReference>
<dbReference type="Pfam" id="PF11861">
    <property type="entry name" value="DUF3381"/>
    <property type="match status" value="1"/>
</dbReference>
<dbReference type="Pfam" id="PF01728">
    <property type="entry name" value="FtsJ"/>
    <property type="match status" value="1"/>
</dbReference>
<dbReference type="Pfam" id="PF07780">
    <property type="entry name" value="Spb1_C"/>
    <property type="match status" value="1"/>
</dbReference>
<dbReference type="SUPFAM" id="SSF53335">
    <property type="entry name" value="S-adenosyl-L-methionine-dependent methyltransferases"/>
    <property type="match status" value="1"/>
</dbReference>
<protein>
    <recommendedName>
        <fullName evidence="1">AdoMet-dependent rRNA methyltransferase SPB1</fullName>
        <ecNumber evidence="1">2.1.1.-</ecNumber>
    </recommendedName>
    <alternativeName>
        <fullName evidence="1">2'-O-ribose RNA methyltransferase</fullName>
    </alternativeName>
    <alternativeName>
        <fullName evidence="1">S-adenosyl-L-methionine-dependent methyltransferase</fullName>
    </alternativeName>
</protein>
<accession>Q52C47</accession>
<accession>A4RH48</accession>
<accession>G4MYR7</accession>
<evidence type="ECO:0000255" key="1">
    <source>
        <dbReference type="HAMAP-Rule" id="MF_03163"/>
    </source>
</evidence>
<evidence type="ECO:0000256" key="2">
    <source>
        <dbReference type="SAM" id="MobiDB-lite"/>
    </source>
</evidence>